<sequence>MYGIEYTTFLIYLISIILFNYILKSITRMMDYIIYKFLLIVTIASIVVNAQNYGINLPITGSMDASYVNATKDKPFLTSTLCLYYPTEARTEINDNEWTSTLSQLFLTKGWPTGSVYFKEYDDIATFSVDPQLYCDYNIVLMRYNSSLELDMSELANLILNEWLCNPMDITLYYYQQNGQANKWIAMGQSCTIKVCPLNTQTLGIGCQTTNTRTFEEVATAEKLVITDVVDGVNHKLDVTTATCTIRNCKKLGPRENVAVIQVGGADILDITSDPTTAPQTERMMRINWKKWWQVFYTIVDYVNQIVQAMSKRSRSLNSAAFYYRV</sequence>
<evidence type="ECO:0000255" key="1"/>
<evidence type="ECO:0000255" key="2">
    <source>
        <dbReference type="HAMAP-Rule" id="MF_04131"/>
    </source>
</evidence>
<evidence type="ECO:0000305" key="3"/>
<organism>
    <name type="scientific">Rotavirus A (isolate RVA/Cow/Thailand/61A/1988/G10P7[5])</name>
    <name type="common">RV-A</name>
    <dbReference type="NCBI Taxonomy" id="10929"/>
    <lineage>
        <taxon>Viruses</taxon>
        <taxon>Riboviria</taxon>
        <taxon>Orthornavirae</taxon>
        <taxon>Duplornaviricota</taxon>
        <taxon>Resentoviricetes</taxon>
        <taxon>Reovirales</taxon>
        <taxon>Sedoreoviridae</taxon>
        <taxon>Rotavirus</taxon>
        <taxon>Rotavirus A</taxon>
    </lineage>
</organism>
<accession>P17968</accession>
<proteinExistence type="inferred from homology"/>
<protein>
    <recommendedName>
        <fullName evidence="2">Outer capsid glycoprotein VP7</fullName>
    </recommendedName>
</protein>
<organismHost>
    <name type="scientific">Bos taurus</name>
    <name type="common">Bovine</name>
    <dbReference type="NCBI Taxonomy" id="9913"/>
</organismHost>
<feature type="signal peptide" evidence="2">
    <location>
        <begin position="1"/>
        <end position="50"/>
    </location>
</feature>
<feature type="chain" id="PRO_0000149580" description="Outer capsid glycoprotein VP7" evidence="2">
    <location>
        <begin position="51"/>
        <end position="326"/>
    </location>
</feature>
<feature type="region of interest" description="CNP motif; interaction with ITGAV/ITGB3" evidence="2">
    <location>
        <begin position="165"/>
        <end position="167"/>
    </location>
</feature>
<feature type="region of interest" description="LVD motif; interaction with ITGA4/ITGB1 heterodimer" evidence="2">
    <location>
        <begin position="237"/>
        <end position="239"/>
    </location>
</feature>
<feature type="region of interest" description="GPR motif; interaction with ITGAX/ITGB2" evidence="2">
    <location>
        <begin position="253"/>
        <end position="255"/>
    </location>
</feature>
<feature type="binding site" evidence="2">
    <location>
        <position position="95"/>
    </location>
    <ligand>
        <name>Ca(2+)</name>
        <dbReference type="ChEBI" id="CHEBI:29108"/>
        <label>1</label>
    </ligand>
</feature>
<feature type="binding site" evidence="2">
    <location>
        <position position="177"/>
    </location>
    <ligand>
        <name>Ca(2+)</name>
        <dbReference type="ChEBI" id="CHEBI:29108"/>
        <label>2</label>
    </ligand>
</feature>
<feature type="binding site" evidence="2">
    <location>
        <position position="206"/>
    </location>
    <ligand>
        <name>Ca(2+)</name>
        <dbReference type="ChEBI" id="CHEBI:29108"/>
        <label>1</label>
    </ligand>
</feature>
<feature type="binding site" evidence="2">
    <location>
        <position position="214"/>
    </location>
    <ligand>
        <name>Ca(2+)</name>
        <dbReference type="ChEBI" id="CHEBI:29108"/>
        <label>1</label>
    </ligand>
</feature>
<feature type="binding site" evidence="2">
    <location>
        <position position="216"/>
    </location>
    <ligand>
        <name>Ca(2+)</name>
        <dbReference type="ChEBI" id="CHEBI:29108"/>
        <label>1</label>
    </ligand>
</feature>
<feature type="binding site" evidence="2">
    <location>
        <position position="228"/>
    </location>
    <ligand>
        <name>Ca(2+)</name>
        <dbReference type="ChEBI" id="CHEBI:29108"/>
        <label>2</label>
    </ligand>
</feature>
<feature type="binding site" evidence="2">
    <location>
        <position position="229"/>
    </location>
    <ligand>
        <name>Ca(2+)</name>
        <dbReference type="ChEBI" id="CHEBI:29108"/>
        <label>2</label>
    </ligand>
</feature>
<feature type="binding site" evidence="2">
    <location>
        <position position="231"/>
    </location>
    <ligand>
        <name>Ca(2+)</name>
        <dbReference type="ChEBI" id="CHEBI:29108"/>
        <label>2</label>
    </ligand>
</feature>
<feature type="binding site" evidence="2">
    <location>
        <position position="301"/>
    </location>
    <ligand>
        <name>Ca(2+)</name>
        <dbReference type="ChEBI" id="CHEBI:29108"/>
        <label>2</label>
    </ligand>
</feature>
<feature type="glycosylation site" description="N-linked (GlcNAc...) asparagine; by host" evidence="1">
    <location>
        <position position="69"/>
    </location>
</feature>
<feature type="glycosylation site" description="N-linked (GlcNAc...) asparagine; by host" evidence="1">
    <location>
        <position position="145"/>
    </location>
</feature>
<feature type="disulfide bond" evidence="2">
    <location>
        <begin position="82"/>
        <end position="135"/>
    </location>
</feature>
<feature type="disulfide bond" evidence="2">
    <location>
        <begin position="165"/>
        <end position="249"/>
    </location>
</feature>
<feature type="disulfide bond" evidence="2">
    <location>
        <begin position="191"/>
        <end position="244"/>
    </location>
</feature>
<feature type="disulfide bond" evidence="2">
    <location>
        <begin position="196"/>
        <end position="207"/>
    </location>
</feature>
<feature type="splice variant" id="VSP_038583" description="In isoform 2." evidence="3">
    <location>
        <begin position="1"/>
        <end position="29"/>
    </location>
</feature>
<reference key="1">
    <citation type="journal article" date="1990" name="Nucleic Acids Res.">
        <title>Nucleotide sequence of the VP7 gene of a bovine rotavirus (strain 61A) with different serotype specificity from serotype 6.</title>
        <authorList>
            <person name="Taniguchi K."/>
            <person name="Pongsuwanna Y."/>
            <person name="Choonthanom M."/>
            <person name="Urasawa S."/>
        </authorList>
    </citation>
    <scope>NUCLEOTIDE SEQUENCE [GENOMIC RNA]</scope>
</reference>
<dbReference type="EMBL" id="X53403">
    <property type="protein sequence ID" value="CAA37478.1"/>
    <property type="molecule type" value="Genomic_RNA"/>
</dbReference>
<dbReference type="SMR" id="P17968"/>
<dbReference type="GO" id="GO:0044166">
    <property type="term" value="C:host cell endoplasmic reticulum lumen"/>
    <property type="evidence" value="ECO:0007669"/>
    <property type="project" value="UniProtKB-SubCell"/>
</dbReference>
<dbReference type="GO" id="GO:0039621">
    <property type="term" value="C:T=13 icosahedral viral capsid"/>
    <property type="evidence" value="ECO:0007669"/>
    <property type="project" value="UniProtKB-UniRule"/>
</dbReference>
<dbReference type="GO" id="GO:0039624">
    <property type="term" value="C:viral outer capsid"/>
    <property type="evidence" value="ECO:0007669"/>
    <property type="project" value="UniProtKB-UniRule"/>
</dbReference>
<dbReference type="GO" id="GO:0046872">
    <property type="term" value="F:metal ion binding"/>
    <property type="evidence" value="ECO:0007669"/>
    <property type="project" value="UniProtKB-KW"/>
</dbReference>
<dbReference type="Gene3D" id="3.40.50.11130">
    <property type="entry name" value="Glycoprotein VP7, domain 1"/>
    <property type="match status" value="1"/>
</dbReference>
<dbReference type="Gene3D" id="2.60.120.800">
    <property type="entry name" value="Rotavirus outer-layer protein VP7, domain 2"/>
    <property type="match status" value="1"/>
</dbReference>
<dbReference type="HAMAP" id="MF_04130">
    <property type="entry name" value="Rota_VP7"/>
    <property type="match status" value="1"/>
</dbReference>
<dbReference type="HAMAP" id="MF_04131">
    <property type="entry name" value="Rota_VP7_A"/>
    <property type="match status" value="1"/>
</dbReference>
<dbReference type="InterPro" id="IPR001963">
    <property type="entry name" value="VP7"/>
</dbReference>
<dbReference type="InterPro" id="IPR042207">
    <property type="entry name" value="VP7_1"/>
</dbReference>
<dbReference type="InterPro" id="IPR042210">
    <property type="entry name" value="VP7_2"/>
</dbReference>
<dbReference type="Pfam" id="PF00434">
    <property type="entry name" value="VP7"/>
    <property type="match status" value="1"/>
</dbReference>
<comment type="function">
    <text evidence="2">Calcium-binding protein that interacts with rotavirus cell receptors once the initial attachment by VP4 has been achieved. Rotavirus attachment and entry into the host cell probably involves multiple sequential contacts between the outer capsid proteins VP4 and VP7, and the cell receptors. Following entry into the host cell, low intracellular or intravesicular Ca(2+) concentration probably causes the calcium-stabilized VP7 trimers to dissociate from the virion. This step is probably necessary for the membrane-disrupting entry step and the release of VP4, which is locked onto the virion by VP7.</text>
</comment>
<comment type="subunit">
    <text evidence="2">Homotrimer; disulfide-linked. 2 Ca(2+) ions bound at each subunit interface in the trimer hold the trimer together. Interacts with the intermediate capsid protein VP6. Interacts with the outer capsid protein VP5*.</text>
</comment>
<comment type="subcellular location">
    <subcellularLocation>
        <location evidence="2">Virion</location>
    </subcellularLocation>
    <subcellularLocation>
        <location evidence="2">Host endoplasmic reticulum lumen</location>
    </subcellularLocation>
    <text evidence="2">The outer layer contains 780 copies of VP7, grouped as 260 trimers. Immature double-layered particles assembled in the cytoplasm bud across the membrane of the endoplasmic reticulum, acquiring during this process a transient lipid membrane that is modified with the ER resident viral glycoproteins NSP4 and VP7; these enveloped particles also contain VP4. As the particles move towards the interior of the ER cisternae, the transient lipid membrane and the non-structural protein NSP4 are lost, while the virus surface proteins VP4 and VP7 rearrange to form the outermost virus protein layer, yielding mature infectious triple-layered particles.</text>
</comment>
<comment type="alternative products">
    <event type="alternative initiation"/>
    <isoform>
        <id>P17968-1</id>
        <name>1</name>
        <sequence type="displayed"/>
    </isoform>
    <isoform>
        <id>P17968-2</id>
        <name>2</name>
        <sequence type="described" ref="VSP_038583"/>
    </isoform>
</comment>
<comment type="PTM">
    <text evidence="2">N-glycosylated.</text>
</comment>
<comment type="PTM">
    <text evidence="2">The N-terminus is blocked possibly by pyroglutamic acid.</text>
</comment>
<comment type="miscellaneous">
    <text evidence="2">Some rotavirus strains are neuraminidase-sensitive and require sialic acid to attach to the cell surface. Some rotavirus strains are integrin-dependent. Some rotavirus strains depend on ganglioside for their entry into the host cell. Hsp70 also seems to be involved in the entry of some strains.</text>
</comment>
<comment type="miscellaneous">
    <text evidence="2">In group A rotaviruses, VP7 defines the G serotype.</text>
</comment>
<comment type="miscellaneous">
    <molecule>Isoform 2</molecule>
    <text evidence="3">Produced by alternative initiation at Met-30 of isoform 1.</text>
</comment>
<comment type="similarity">
    <text evidence="2">Belongs to the rotavirus VP7 family.</text>
</comment>
<name>VP7_ROTB6</name>
<keyword id="KW-0024">Alternative initiation</keyword>
<keyword id="KW-0106">Calcium</keyword>
<keyword id="KW-0167">Capsid protein</keyword>
<keyword id="KW-1015">Disulfide bond</keyword>
<keyword id="KW-0325">Glycoprotein</keyword>
<keyword id="KW-1038">Host endoplasmic reticulum</keyword>
<keyword id="KW-0945">Host-virus interaction</keyword>
<keyword id="KW-0479">Metal-binding</keyword>
<keyword id="KW-1152">Outer capsid protein</keyword>
<keyword id="KW-0732">Signal</keyword>
<keyword id="KW-1146">T=13 icosahedral capsid protein</keyword>
<keyword id="KW-0946">Virion</keyword>